<organism>
    <name type="scientific">Staphylococcus aureus (strain MSSA476)</name>
    <dbReference type="NCBI Taxonomy" id="282459"/>
    <lineage>
        <taxon>Bacteria</taxon>
        <taxon>Bacillati</taxon>
        <taxon>Bacillota</taxon>
        <taxon>Bacilli</taxon>
        <taxon>Bacillales</taxon>
        <taxon>Staphylococcaceae</taxon>
        <taxon>Staphylococcus</taxon>
    </lineage>
</organism>
<accession>Q6G8V9</accession>
<feature type="chain" id="PRO_0000176974" description="Transcription elongation factor GreA">
    <location>
        <begin position="1"/>
        <end position="158"/>
    </location>
</feature>
<feature type="coiled-coil region" evidence="1">
    <location>
        <begin position="4"/>
        <end position="70"/>
    </location>
</feature>
<gene>
    <name evidence="1" type="primary">greA</name>
    <name type="ordered locus">SAS1546</name>
</gene>
<keyword id="KW-0175">Coiled coil</keyword>
<keyword id="KW-0238">DNA-binding</keyword>
<keyword id="KW-0804">Transcription</keyword>
<keyword id="KW-0805">Transcription regulation</keyword>
<proteinExistence type="inferred from homology"/>
<sequence length="158" mass="17743">MENQKQYPMTQEGFEKLERELEELKTVKRPEVVEKIKVARSFGDLSENSEYDAAKDEQGFIEQDIQRIEHMLRNALIIEDTGDNNVVKIGKTVTFVELPGDEEESYQIVGSAESDAFNGKISNESPMAKALIGKGLDDEVRVPLPNGGEMNVKIVNIQ</sequence>
<protein>
    <recommendedName>
        <fullName evidence="1">Transcription elongation factor GreA</fullName>
    </recommendedName>
    <alternativeName>
        <fullName evidence="1">Transcript cleavage factor GreA</fullName>
    </alternativeName>
</protein>
<dbReference type="EMBL" id="BX571857">
    <property type="protein sequence ID" value="CAG43347.1"/>
    <property type="molecule type" value="Genomic_DNA"/>
</dbReference>
<dbReference type="RefSeq" id="WP_000431312.1">
    <property type="nucleotide sequence ID" value="NC_002953.3"/>
</dbReference>
<dbReference type="SMR" id="Q6G8V9"/>
<dbReference type="KEGG" id="sas:SAS1546"/>
<dbReference type="HOGENOM" id="CLU_101379_2_1_9"/>
<dbReference type="GO" id="GO:0003677">
    <property type="term" value="F:DNA binding"/>
    <property type="evidence" value="ECO:0007669"/>
    <property type="project" value="UniProtKB-UniRule"/>
</dbReference>
<dbReference type="GO" id="GO:0070063">
    <property type="term" value="F:RNA polymerase binding"/>
    <property type="evidence" value="ECO:0007669"/>
    <property type="project" value="InterPro"/>
</dbReference>
<dbReference type="GO" id="GO:0006354">
    <property type="term" value="P:DNA-templated transcription elongation"/>
    <property type="evidence" value="ECO:0007669"/>
    <property type="project" value="TreeGrafter"/>
</dbReference>
<dbReference type="GO" id="GO:0032784">
    <property type="term" value="P:regulation of DNA-templated transcription elongation"/>
    <property type="evidence" value="ECO:0007669"/>
    <property type="project" value="UniProtKB-UniRule"/>
</dbReference>
<dbReference type="FunFam" id="1.10.287.180:FF:000001">
    <property type="entry name" value="Transcription elongation factor GreA"/>
    <property type="match status" value="1"/>
</dbReference>
<dbReference type="FunFam" id="3.10.50.30:FF:000001">
    <property type="entry name" value="Transcription elongation factor GreA"/>
    <property type="match status" value="1"/>
</dbReference>
<dbReference type="Gene3D" id="3.10.50.30">
    <property type="entry name" value="Transcription elongation factor, GreA/GreB, C-terminal domain"/>
    <property type="match status" value="1"/>
</dbReference>
<dbReference type="Gene3D" id="1.10.287.180">
    <property type="entry name" value="Transcription elongation factor, GreA/GreB, N-terminal domain"/>
    <property type="match status" value="1"/>
</dbReference>
<dbReference type="HAMAP" id="MF_00105">
    <property type="entry name" value="GreA_GreB"/>
    <property type="match status" value="1"/>
</dbReference>
<dbReference type="InterPro" id="IPR036953">
    <property type="entry name" value="GreA/GreB_C_sf"/>
</dbReference>
<dbReference type="InterPro" id="IPR018151">
    <property type="entry name" value="TF_GreA/GreB_CS"/>
</dbReference>
<dbReference type="InterPro" id="IPR006359">
    <property type="entry name" value="Tscrpt_elong_fac_GreA"/>
</dbReference>
<dbReference type="InterPro" id="IPR028624">
    <property type="entry name" value="Tscrpt_elong_fac_GreA/B"/>
</dbReference>
<dbReference type="InterPro" id="IPR001437">
    <property type="entry name" value="Tscrpt_elong_fac_GreA/B_C"/>
</dbReference>
<dbReference type="InterPro" id="IPR023459">
    <property type="entry name" value="Tscrpt_elong_fac_GreA/B_fam"/>
</dbReference>
<dbReference type="InterPro" id="IPR022691">
    <property type="entry name" value="Tscrpt_elong_fac_GreA/B_N"/>
</dbReference>
<dbReference type="InterPro" id="IPR036805">
    <property type="entry name" value="Tscrpt_elong_fac_GreA/B_N_sf"/>
</dbReference>
<dbReference type="NCBIfam" id="TIGR01462">
    <property type="entry name" value="greA"/>
    <property type="match status" value="1"/>
</dbReference>
<dbReference type="NCBIfam" id="NF001261">
    <property type="entry name" value="PRK00226.1-2"/>
    <property type="match status" value="1"/>
</dbReference>
<dbReference type="NCBIfam" id="NF001263">
    <property type="entry name" value="PRK00226.1-4"/>
    <property type="match status" value="1"/>
</dbReference>
<dbReference type="PANTHER" id="PTHR30437">
    <property type="entry name" value="TRANSCRIPTION ELONGATION FACTOR GREA"/>
    <property type="match status" value="1"/>
</dbReference>
<dbReference type="PANTHER" id="PTHR30437:SF4">
    <property type="entry name" value="TRANSCRIPTION ELONGATION FACTOR GREA"/>
    <property type="match status" value="1"/>
</dbReference>
<dbReference type="Pfam" id="PF01272">
    <property type="entry name" value="GreA_GreB"/>
    <property type="match status" value="1"/>
</dbReference>
<dbReference type="Pfam" id="PF03449">
    <property type="entry name" value="GreA_GreB_N"/>
    <property type="match status" value="1"/>
</dbReference>
<dbReference type="PIRSF" id="PIRSF006092">
    <property type="entry name" value="GreA_GreB"/>
    <property type="match status" value="1"/>
</dbReference>
<dbReference type="SUPFAM" id="SSF54534">
    <property type="entry name" value="FKBP-like"/>
    <property type="match status" value="1"/>
</dbReference>
<dbReference type="SUPFAM" id="SSF46557">
    <property type="entry name" value="GreA transcript cleavage protein, N-terminal domain"/>
    <property type="match status" value="1"/>
</dbReference>
<dbReference type="PROSITE" id="PS00829">
    <property type="entry name" value="GREAB_1"/>
    <property type="match status" value="1"/>
</dbReference>
<dbReference type="PROSITE" id="PS00830">
    <property type="entry name" value="GREAB_2"/>
    <property type="match status" value="1"/>
</dbReference>
<reference key="1">
    <citation type="journal article" date="2004" name="Proc. Natl. Acad. Sci. U.S.A.">
        <title>Complete genomes of two clinical Staphylococcus aureus strains: evidence for the rapid evolution of virulence and drug resistance.</title>
        <authorList>
            <person name="Holden M.T.G."/>
            <person name="Feil E.J."/>
            <person name="Lindsay J.A."/>
            <person name="Peacock S.J."/>
            <person name="Day N.P.J."/>
            <person name="Enright M.C."/>
            <person name="Foster T.J."/>
            <person name="Moore C.E."/>
            <person name="Hurst L."/>
            <person name="Atkin R."/>
            <person name="Barron A."/>
            <person name="Bason N."/>
            <person name="Bentley S.D."/>
            <person name="Chillingworth C."/>
            <person name="Chillingworth T."/>
            <person name="Churcher C."/>
            <person name="Clark L."/>
            <person name="Corton C."/>
            <person name="Cronin A."/>
            <person name="Doggett J."/>
            <person name="Dowd L."/>
            <person name="Feltwell T."/>
            <person name="Hance Z."/>
            <person name="Harris B."/>
            <person name="Hauser H."/>
            <person name="Holroyd S."/>
            <person name="Jagels K."/>
            <person name="James K.D."/>
            <person name="Lennard N."/>
            <person name="Line A."/>
            <person name="Mayes R."/>
            <person name="Moule S."/>
            <person name="Mungall K."/>
            <person name="Ormond D."/>
            <person name="Quail M.A."/>
            <person name="Rabbinowitsch E."/>
            <person name="Rutherford K.M."/>
            <person name="Sanders M."/>
            <person name="Sharp S."/>
            <person name="Simmonds M."/>
            <person name="Stevens K."/>
            <person name="Whitehead S."/>
            <person name="Barrell B.G."/>
            <person name="Spratt B.G."/>
            <person name="Parkhill J."/>
        </authorList>
    </citation>
    <scope>NUCLEOTIDE SEQUENCE [LARGE SCALE GENOMIC DNA]</scope>
    <source>
        <strain>MSSA476</strain>
    </source>
</reference>
<evidence type="ECO:0000255" key="1">
    <source>
        <dbReference type="HAMAP-Rule" id="MF_00105"/>
    </source>
</evidence>
<name>GREA_STAAS</name>
<comment type="function">
    <text evidence="1">Necessary for efficient RNA polymerase transcription elongation past template-encoded arresting sites. The arresting sites in DNA have the property of trapping a certain fraction of elongating RNA polymerases that pass through, resulting in locked ternary complexes. Cleavage of the nascent transcript by cleavage factors such as GreA or GreB allows the resumption of elongation from the new 3'terminus. GreA releases sequences of 2 to 3 nucleotides.</text>
</comment>
<comment type="similarity">
    <text evidence="1">Belongs to the GreA/GreB family.</text>
</comment>